<proteinExistence type="inferred from homology"/>
<sequence length="286" mass="31670">MATPREIKKRINSVKNTRKITRTMEMVSTAKSKKISDRVNASHPFSNKIKELVSSLASLSGVVHSPYLRRPEKIKTVALLVITANRGLCGGYNSNVNRLAKAKVAEWKKAGVNVRLFIVGKKGISFFKFAGEKAEKTYTHLDDKSGYKEAEEFANLFLELFANEEVDAVEIASTVYYSSASQKPEVTRILPFEPAKEGNGNDLVVYEPSPERVLESLLPLVVKTAFLKAILEANCSEQIARRIAMKSATDAASEMIKLLTRGYNRVRQAKITQEISEIVAGADSLN</sequence>
<accession>Q04S17</accession>
<dbReference type="EMBL" id="CP000350">
    <property type="protein sequence ID" value="ABJ76303.1"/>
    <property type="molecule type" value="Genomic_DNA"/>
</dbReference>
<dbReference type="RefSeq" id="WP_002754308.1">
    <property type="nucleotide sequence ID" value="NC_008510.1"/>
</dbReference>
<dbReference type="SMR" id="Q04S17"/>
<dbReference type="KEGG" id="lbj:LBJ_1753"/>
<dbReference type="HOGENOM" id="CLU_050669_0_0_12"/>
<dbReference type="Proteomes" id="UP000000656">
    <property type="component" value="Chromosome 1"/>
</dbReference>
<dbReference type="GO" id="GO:0005886">
    <property type="term" value="C:plasma membrane"/>
    <property type="evidence" value="ECO:0007669"/>
    <property type="project" value="UniProtKB-SubCell"/>
</dbReference>
<dbReference type="GO" id="GO:0045259">
    <property type="term" value="C:proton-transporting ATP synthase complex"/>
    <property type="evidence" value="ECO:0007669"/>
    <property type="project" value="UniProtKB-KW"/>
</dbReference>
<dbReference type="GO" id="GO:0005524">
    <property type="term" value="F:ATP binding"/>
    <property type="evidence" value="ECO:0007669"/>
    <property type="project" value="UniProtKB-UniRule"/>
</dbReference>
<dbReference type="GO" id="GO:0046933">
    <property type="term" value="F:proton-transporting ATP synthase activity, rotational mechanism"/>
    <property type="evidence" value="ECO:0007669"/>
    <property type="project" value="UniProtKB-UniRule"/>
</dbReference>
<dbReference type="GO" id="GO:0042777">
    <property type="term" value="P:proton motive force-driven plasma membrane ATP synthesis"/>
    <property type="evidence" value="ECO:0007669"/>
    <property type="project" value="UniProtKB-UniRule"/>
</dbReference>
<dbReference type="CDD" id="cd12151">
    <property type="entry name" value="F1-ATPase_gamma"/>
    <property type="match status" value="1"/>
</dbReference>
<dbReference type="FunFam" id="1.10.287.80:FF:000009">
    <property type="entry name" value="ATP synthase gamma chain"/>
    <property type="match status" value="1"/>
</dbReference>
<dbReference type="FunFam" id="3.40.1380.10:FF:000006">
    <property type="entry name" value="ATP synthase gamma chain"/>
    <property type="match status" value="1"/>
</dbReference>
<dbReference type="Gene3D" id="3.40.1380.10">
    <property type="match status" value="1"/>
</dbReference>
<dbReference type="Gene3D" id="1.10.287.80">
    <property type="entry name" value="ATP synthase, gamma subunit, helix hairpin domain"/>
    <property type="match status" value="1"/>
</dbReference>
<dbReference type="HAMAP" id="MF_00815">
    <property type="entry name" value="ATP_synth_gamma_bact"/>
    <property type="match status" value="1"/>
</dbReference>
<dbReference type="InterPro" id="IPR035968">
    <property type="entry name" value="ATP_synth_F1_ATPase_gsu"/>
</dbReference>
<dbReference type="InterPro" id="IPR000131">
    <property type="entry name" value="ATP_synth_F1_gsu"/>
</dbReference>
<dbReference type="InterPro" id="IPR023632">
    <property type="entry name" value="ATP_synth_F1_gsu_CS"/>
</dbReference>
<dbReference type="NCBIfam" id="TIGR01146">
    <property type="entry name" value="ATPsyn_F1gamma"/>
    <property type="match status" value="1"/>
</dbReference>
<dbReference type="NCBIfam" id="NF009960">
    <property type="entry name" value="PRK13427.1"/>
    <property type="match status" value="1"/>
</dbReference>
<dbReference type="PANTHER" id="PTHR11693">
    <property type="entry name" value="ATP SYNTHASE GAMMA CHAIN"/>
    <property type="match status" value="1"/>
</dbReference>
<dbReference type="PANTHER" id="PTHR11693:SF22">
    <property type="entry name" value="ATP SYNTHASE SUBUNIT GAMMA, MITOCHONDRIAL"/>
    <property type="match status" value="1"/>
</dbReference>
<dbReference type="Pfam" id="PF00231">
    <property type="entry name" value="ATP-synt"/>
    <property type="match status" value="1"/>
</dbReference>
<dbReference type="PRINTS" id="PR00126">
    <property type="entry name" value="ATPASEGAMMA"/>
</dbReference>
<dbReference type="SUPFAM" id="SSF52943">
    <property type="entry name" value="ATP synthase (F1-ATPase), gamma subunit"/>
    <property type="match status" value="1"/>
</dbReference>
<dbReference type="PROSITE" id="PS00153">
    <property type="entry name" value="ATPASE_GAMMA"/>
    <property type="match status" value="1"/>
</dbReference>
<comment type="function">
    <text evidence="1">Produces ATP from ADP in the presence of a proton gradient across the membrane. The gamma chain is believed to be important in regulating ATPase activity and the flow of protons through the CF(0) complex.</text>
</comment>
<comment type="subunit">
    <text evidence="1">F-type ATPases have 2 components, CF(1) - the catalytic core - and CF(0) - the membrane proton channel. CF(1) has five subunits: alpha(3), beta(3), gamma(1), delta(1), epsilon(1). CF(0) has three main subunits: a, b and c.</text>
</comment>
<comment type="subcellular location">
    <subcellularLocation>
        <location evidence="1">Cell inner membrane</location>
        <topology evidence="1">Peripheral membrane protein</topology>
    </subcellularLocation>
</comment>
<comment type="similarity">
    <text evidence="1">Belongs to the ATPase gamma chain family.</text>
</comment>
<reference key="1">
    <citation type="journal article" date="2006" name="Proc. Natl. Acad. Sci. U.S.A.">
        <title>Genome reduction in Leptospira borgpetersenii reflects limited transmission potential.</title>
        <authorList>
            <person name="Bulach D.M."/>
            <person name="Zuerner R.L."/>
            <person name="Wilson P."/>
            <person name="Seemann T."/>
            <person name="McGrath A."/>
            <person name="Cullen P.A."/>
            <person name="Davis J."/>
            <person name="Johnson M."/>
            <person name="Kuczek E."/>
            <person name="Alt D.P."/>
            <person name="Peterson-Burch B."/>
            <person name="Coppel R.L."/>
            <person name="Rood J.I."/>
            <person name="Davies J.K."/>
            <person name="Adler B."/>
        </authorList>
    </citation>
    <scope>NUCLEOTIDE SEQUENCE [LARGE SCALE GENOMIC DNA]</scope>
    <source>
        <strain>JB197</strain>
    </source>
</reference>
<gene>
    <name evidence="1" type="primary">atpG</name>
    <name type="ordered locus">LBJ_1753</name>
</gene>
<protein>
    <recommendedName>
        <fullName evidence="1">ATP synthase gamma chain</fullName>
    </recommendedName>
    <alternativeName>
        <fullName evidence="1">ATP synthase F1 sector gamma subunit</fullName>
    </alternativeName>
    <alternativeName>
        <fullName evidence="1">F-ATPase gamma subunit</fullName>
    </alternativeName>
</protein>
<name>ATPG_LEPBJ</name>
<keyword id="KW-0066">ATP synthesis</keyword>
<keyword id="KW-0997">Cell inner membrane</keyword>
<keyword id="KW-1003">Cell membrane</keyword>
<keyword id="KW-0139">CF(1)</keyword>
<keyword id="KW-0375">Hydrogen ion transport</keyword>
<keyword id="KW-0406">Ion transport</keyword>
<keyword id="KW-0472">Membrane</keyword>
<keyword id="KW-0813">Transport</keyword>
<feature type="chain" id="PRO_1000053243" description="ATP synthase gamma chain">
    <location>
        <begin position="1"/>
        <end position="286"/>
    </location>
</feature>
<evidence type="ECO:0000255" key="1">
    <source>
        <dbReference type="HAMAP-Rule" id="MF_00815"/>
    </source>
</evidence>
<organism>
    <name type="scientific">Leptospira borgpetersenii serovar Hardjo-bovis (strain JB197)</name>
    <dbReference type="NCBI Taxonomy" id="355277"/>
    <lineage>
        <taxon>Bacteria</taxon>
        <taxon>Pseudomonadati</taxon>
        <taxon>Spirochaetota</taxon>
        <taxon>Spirochaetia</taxon>
        <taxon>Leptospirales</taxon>
        <taxon>Leptospiraceae</taxon>
        <taxon>Leptospira</taxon>
    </lineage>
</organism>